<comment type="function">
    <text evidence="1">Catalyzes the isomerization between 2-isopropylmalate and 3-isopropylmalate, via the formation of 2-isopropylmaleate.</text>
</comment>
<comment type="catalytic activity">
    <reaction evidence="1">
        <text>(2R,3S)-3-isopropylmalate = (2S)-2-isopropylmalate</text>
        <dbReference type="Rhea" id="RHEA:32287"/>
        <dbReference type="ChEBI" id="CHEBI:1178"/>
        <dbReference type="ChEBI" id="CHEBI:35121"/>
        <dbReference type="EC" id="4.2.1.33"/>
    </reaction>
</comment>
<comment type="cofactor">
    <cofactor evidence="1">
        <name>[4Fe-4S] cluster</name>
        <dbReference type="ChEBI" id="CHEBI:49883"/>
    </cofactor>
    <text evidence="1">Binds 1 [4Fe-4S] cluster per subunit.</text>
</comment>
<comment type="pathway">
    <text evidence="1">Amino-acid biosynthesis; L-leucine biosynthesis; L-leucine from 3-methyl-2-oxobutanoate: step 2/4.</text>
</comment>
<comment type="subunit">
    <text evidence="1">Heterodimer of LeuC and LeuD.</text>
</comment>
<comment type="similarity">
    <text evidence="1">Belongs to the aconitase/IPM isomerase family. LeuC type 1 subfamily.</text>
</comment>
<feature type="chain" id="PRO_1000084222" description="3-isopropylmalate dehydratase large subunit">
    <location>
        <begin position="1"/>
        <end position="481"/>
    </location>
</feature>
<feature type="region of interest" description="Disordered" evidence="2">
    <location>
        <begin position="437"/>
        <end position="463"/>
    </location>
</feature>
<feature type="binding site" evidence="1">
    <location>
        <position position="363"/>
    </location>
    <ligand>
        <name>[4Fe-4S] cluster</name>
        <dbReference type="ChEBI" id="CHEBI:49883"/>
    </ligand>
</feature>
<feature type="binding site" evidence="1">
    <location>
        <position position="423"/>
    </location>
    <ligand>
        <name>[4Fe-4S] cluster</name>
        <dbReference type="ChEBI" id="CHEBI:49883"/>
    </ligand>
</feature>
<feature type="binding site" evidence="1">
    <location>
        <position position="426"/>
    </location>
    <ligand>
        <name>[4Fe-4S] cluster</name>
        <dbReference type="ChEBI" id="CHEBI:49883"/>
    </ligand>
</feature>
<proteinExistence type="inferred from homology"/>
<accession>A8M5I3</accession>
<reference key="1">
    <citation type="submission" date="2007-10" db="EMBL/GenBank/DDBJ databases">
        <title>Complete sequence of Salinispora arenicola CNS-205.</title>
        <authorList>
            <consortium name="US DOE Joint Genome Institute"/>
            <person name="Copeland A."/>
            <person name="Lucas S."/>
            <person name="Lapidus A."/>
            <person name="Barry K."/>
            <person name="Glavina del Rio T."/>
            <person name="Dalin E."/>
            <person name="Tice H."/>
            <person name="Pitluck S."/>
            <person name="Foster B."/>
            <person name="Schmutz J."/>
            <person name="Larimer F."/>
            <person name="Land M."/>
            <person name="Hauser L."/>
            <person name="Kyrpides N."/>
            <person name="Ivanova N."/>
            <person name="Jensen P.R."/>
            <person name="Moore B.S."/>
            <person name="Penn K."/>
            <person name="Jenkins C."/>
            <person name="Udwary D."/>
            <person name="Xiang L."/>
            <person name="Gontang E."/>
            <person name="Richardson P."/>
        </authorList>
    </citation>
    <scope>NUCLEOTIDE SEQUENCE [LARGE SCALE GENOMIC DNA]</scope>
    <source>
        <strain>CNS-205</strain>
    </source>
</reference>
<name>LEUC_SALAI</name>
<sequence length="481" mass="51175">MVGVTSEPRTLAEKVWAAHVVRSAEGEPDLLFIDLHLLHEVTSPQAFDGLRLAGRRVRRPDLTIATEDHNTPTGYADPSFRSRRGDLLTITDPTSRTQIETLRRNCAEFGVRLHPLGDKNQGIVHVIGPQLGLTQPGMTIVCGDSHTATHGAFGALAFGIGTSEVEHVLATQTLPQARPRTMAVNVVGDLAPGVTAKDLVLALIAQVGTGGGRGHVVEYRGEAIRKLSMEGRMTIANMSIEWGAKAGMIAPDETTFDYLRGRPNAPAGTDWEAAVAYWRTLTTDADATFDAEVTLDASRITPFVTWGTNPGQGAPLDASVPHPDELATEPERAAARRALEYMDLAPGTALRDLAVDVVFVGSCTNGRIEDLRAAADVLRGHRVAQGVRMLVVPGSAVVRESAEAEGLDKIFTEAGAEWRFAGCSMCLGMNPDTLLPGQRAASTSNRNFEGRQGRGGRTHLVSPPVAAATAVTGRLASPADL</sequence>
<gene>
    <name evidence="1" type="primary">leuC</name>
    <name type="ordered locus">Sare_1149</name>
</gene>
<evidence type="ECO:0000255" key="1">
    <source>
        <dbReference type="HAMAP-Rule" id="MF_01026"/>
    </source>
</evidence>
<evidence type="ECO:0000256" key="2">
    <source>
        <dbReference type="SAM" id="MobiDB-lite"/>
    </source>
</evidence>
<keyword id="KW-0004">4Fe-4S</keyword>
<keyword id="KW-0028">Amino-acid biosynthesis</keyword>
<keyword id="KW-0100">Branched-chain amino acid biosynthesis</keyword>
<keyword id="KW-0408">Iron</keyword>
<keyword id="KW-0411">Iron-sulfur</keyword>
<keyword id="KW-0432">Leucine biosynthesis</keyword>
<keyword id="KW-0456">Lyase</keyword>
<keyword id="KW-0479">Metal-binding</keyword>
<protein>
    <recommendedName>
        <fullName evidence="1">3-isopropylmalate dehydratase large subunit</fullName>
        <ecNumber evidence="1">4.2.1.33</ecNumber>
    </recommendedName>
    <alternativeName>
        <fullName evidence="1">Alpha-IPM isomerase</fullName>
        <shortName evidence="1">IPMI</shortName>
    </alternativeName>
    <alternativeName>
        <fullName evidence="1">Isopropylmalate isomerase</fullName>
    </alternativeName>
</protein>
<organism>
    <name type="scientific">Salinispora arenicola (strain CNS-205)</name>
    <dbReference type="NCBI Taxonomy" id="391037"/>
    <lineage>
        <taxon>Bacteria</taxon>
        <taxon>Bacillati</taxon>
        <taxon>Actinomycetota</taxon>
        <taxon>Actinomycetes</taxon>
        <taxon>Micromonosporales</taxon>
        <taxon>Micromonosporaceae</taxon>
        <taxon>Salinispora</taxon>
    </lineage>
</organism>
<dbReference type="EC" id="4.2.1.33" evidence="1"/>
<dbReference type="EMBL" id="CP000850">
    <property type="protein sequence ID" value="ABV97057.1"/>
    <property type="molecule type" value="Genomic_DNA"/>
</dbReference>
<dbReference type="SMR" id="A8M5I3"/>
<dbReference type="STRING" id="391037.Sare_1149"/>
<dbReference type="KEGG" id="saq:Sare_1149"/>
<dbReference type="PATRIC" id="fig|391037.6.peg.1165"/>
<dbReference type="eggNOG" id="COG0065">
    <property type="taxonomic scope" value="Bacteria"/>
</dbReference>
<dbReference type="HOGENOM" id="CLU_006714_3_4_11"/>
<dbReference type="OrthoDB" id="9802769at2"/>
<dbReference type="UniPathway" id="UPA00048">
    <property type="reaction ID" value="UER00071"/>
</dbReference>
<dbReference type="GO" id="GO:0003861">
    <property type="term" value="F:3-isopropylmalate dehydratase activity"/>
    <property type="evidence" value="ECO:0007669"/>
    <property type="project" value="UniProtKB-UniRule"/>
</dbReference>
<dbReference type="GO" id="GO:0051539">
    <property type="term" value="F:4 iron, 4 sulfur cluster binding"/>
    <property type="evidence" value="ECO:0007669"/>
    <property type="project" value="UniProtKB-KW"/>
</dbReference>
<dbReference type="GO" id="GO:0046872">
    <property type="term" value="F:metal ion binding"/>
    <property type="evidence" value="ECO:0007669"/>
    <property type="project" value="UniProtKB-KW"/>
</dbReference>
<dbReference type="GO" id="GO:0009098">
    <property type="term" value="P:L-leucine biosynthetic process"/>
    <property type="evidence" value="ECO:0007669"/>
    <property type="project" value="UniProtKB-UniRule"/>
</dbReference>
<dbReference type="CDD" id="cd01583">
    <property type="entry name" value="IPMI"/>
    <property type="match status" value="1"/>
</dbReference>
<dbReference type="FunFam" id="3.30.499.10:FF:000007">
    <property type="entry name" value="3-isopropylmalate dehydratase large subunit"/>
    <property type="match status" value="1"/>
</dbReference>
<dbReference type="Gene3D" id="3.30.499.10">
    <property type="entry name" value="Aconitase, domain 3"/>
    <property type="match status" value="2"/>
</dbReference>
<dbReference type="HAMAP" id="MF_01026">
    <property type="entry name" value="LeuC_type1"/>
    <property type="match status" value="1"/>
</dbReference>
<dbReference type="InterPro" id="IPR004430">
    <property type="entry name" value="3-IsopropMal_deHydase_lsu"/>
</dbReference>
<dbReference type="InterPro" id="IPR015931">
    <property type="entry name" value="Acnase/IPM_dHydase_lsu_aba_1/3"/>
</dbReference>
<dbReference type="InterPro" id="IPR001030">
    <property type="entry name" value="Acoase/IPM_deHydtase_lsu_aba"/>
</dbReference>
<dbReference type="InterPro" id="IPR018136">
    <property type="entry name" value="Aconitase_4Fe-4S_BS"/>
</dbReference>
<dbReference type="InterPro" id="IPR036008">
    <property type="entry name" value="Aconitase_4Fe-4S_dom"/>
</dbReference>
<dbReference type="InterPro" id="IPR050067">
    <property type="entry name" value="IPM_dehydratase_rel_enz"/>
</dbReference>
<dbReference type="InterPro" id="IPR033941">
    <property type="entry name" value="IPMI_cat"/>
</dbReference>
<dbReference type="NCBIfam" id="TIGR00170">
    <property type="entry name" value="leuC"/>
    <property type="match status" value="1"/>
</dbReference>
<dbReference type="NCBIfam" id="NF004016">
    <property type="entry name" value="PRK05478.1"/>
    <property type="match status" value="1"/>
</dbReference>
<dbReference type="NCBIfam" id="NF009116">
    <property type="entry name" value="PRK12466.1"/>
    <property type="match status" value="1"/>
</dbReference>
<dbReference type="PANTHER" id="PTHR43822:SF9">
    <property type="entry name" value="3-ISOPROPYLMALATE DEHYDRATASE"/>
    <property type="match status" value="1"/>
</dbReference>
<dbReference type="PANTHER" id="PTHR43822">
    <property type="entry name" value="HOMOACONITASE, MITOCHONDRIAL-RELATED"/>
    <property type="match status" value="1"/>
</dbReference>
<dbReference type="Pfam" id="PF00330">
    <property type="entry name" value="Aconitase"/>
    <property type="match status" value="1"/>
</dbReference>
<dbReference type="PRINTS" id="PR00415">
    <property type="entry name" value="ACONITASE"/>
</dbReference>
<dbReference type="SUPFAM" id="SSF53732">
    <property type="entry name" value="Aconitase iron-sulfur domain"/>
    <property type="match status" value="1"/>
</dbReference>
<dbReference type="PROSITE" id="PS00450">
    <property type="entry name" value="ACONITASE_1"/>
    <property type="match status" value="1"/>
</dbReference>
<dbReference type="PROSITE" id="PS01244">
    <property type="entry name" value="ACONITASE_2"/>
    <property type="match status" value="1"/>
</dbReference>